<organism>
    <name type="scientific">Theiler's murine encephalomyelitis virus (strain DA)</name>
    <name type="common">TMEV</name>
    <dbReference type="NCBI Taxonomy" id="12126"/>
    <lineage>
        <taxon>Viruses</taxon>
        <taxon>Riboviria</taxon>
        <taxon>Orthornavirae</taxon>
        <taxon>Pisuviricota</taxon>
        <taxon>Pisoniviricetes</taxon>
        <taxon>Picornavirales</taxon>
        <taxon>Picornaviridae</taxon>
        <taxon>Caphthovirinae</taxon>
        <taxon>Cardiovirus</taxon>
        <taxon>Cardiovirus B</taxon>
    </lineage>
</organism>
<comment type="function">
    <molecule>Leader protein</molecule>
    <text evidence="11 16 18 19 21 22">Forms a complex with host RAN and probably binds to exportins carrying activated MAPK in order to mediate the hyperphosphorylation of host Phe/Gly containing nuclear pore proteins (Nups) resulting in cessation of active nucleocytoplasmic transport (Probable). Proteins with NLS signals fail to import, cellular mRNAs fail to export, and some proteins small enough for diffusion are not retained anymore (efflux) (By similarity). The resulting inhibition of cellular protein synthesis serves to ensure maximal viral gene expression and to evade host immune response (By similarity). The leader protein also inhibits host interferon regulatory factor 3 (IRF3) dimerization, thereby blocking the transcriptional activation of IFN genes (PubMed:19088287). Binds to host RNase L thereby preventing its activation by 2'-5' oligoadenylates in order to counteract the antiviral interferon-inducible OAS/RNase L pathway (PubMed:23825954, PubMed:29652922).</text>
</comment>
<comment type="function">
    <molecule>Capsid protein VP1</molecule>
    <text evidence="2">Forms an icosahedral capsid of pseudo T=3 symmetry with capsid proteins VP2 and VP3. Together they form an icosahedral capsid composed of 60 copies of each VP1, VP2, and VP3, with a diameter of approximately 300 Angstroms. VP4 lies on the inner surface of the protein shell formed by VP1, VP2 and VP3. All the three latter proteins contain a beta-sheet structure called beta-barrel jelly roll. VP1 is situated at the 12 fivefold axes, whereas VP2 and VP3 are located at the quasi-sixfold axes.</text>
</comment>
<comment type="function">
    <molecule>Capsid protein VP2</molecule>
    <text evidence="2">Forms an icosahedral capsid of pseudo T=3 symmetry with capsid proteins VP2 and VP3. Together they form an icosahedral capsid composed of 60 copies of each VP1, VP2, and VP3, with a diameter of approximately 300 Angstroms. VP4 lies on the inner surface of the protein shell formed by VP1, VP2 and VP3. All the three latter proteins contain a beta-sheet structure called beta-barrel jelly roll. VP1 is situated at the 12 fivefold axes, whereas VP2 and VP3 are located at the quasi-sixfold axes.</text>
</comment>
<comment type="function">
    <molecule>Capsid protein VP3</molecule>
    <text evidence="2">Forms an icosahedral capsid of pseudo T=3 symmetry with capsid proteins VP2 and VP3. Together they form an icosahedral capsid composed of 60 copies of each VP1, VP2, and VP3, with a diameter of approximately 300 Angstroms. VP4 lies on the inner surface of the protein shell formed by VP1, VP2 and VP3. All the three latter proteins contain a beta-sheet structure called beta-barrel jelly roll. VP1 is situated at the 12 fivefold axes, whereas VP2 and VP3 are located at the quasi-sixfold axes.</text>
</comment>
<comment type="function">
    <molecule>Capsid protein VP4</molecule>
    <text evidence="2 3">Lies on the inner surface of the capsid shell (By similarity). After binding to the host receptor, the capsid undergoes conformational changes (By similarity). Capsid protein VP4 is released, capsid protein VP1 N-terminus is externalized, and together, they shape a pore in the host membrane through which the viral genome is translocated into the host cell cytoplasm (By similarity). After genome has been released, the channel shrinks (By similarity).</text>
</comment>
<comment type="function">
    <molecule>Capsid protein VP0</molecule>
    <text evidence="8">VP0 precursor is a component of immature procapsids.</text>
</comment>
<comment type="function">
    <molecule>Protein 2A</molecule>
    <text evidence="11">Involved in host translation shutoff by inhibiting cap-dependent mRNA translation (By similarity). Nuclear localization is required for this function (By similarity). The resulting inhibition of cellular protein synthesis serves to ensure maximal viral gene expression and to evade host immune response (By similarity). Inhibits the phosphorylation of the leader protein (By similarity).</text>
</comment>
<comment type="function">
    <molecule>Protein 2B</molecule>
    <text evidence="1">Affects membrane integrity and causes an increase in membrane permeability.</text>
</comment>
<comment type="function">
    <molecule>Protein 2C</molecule>
    <text evidence="5 7">Associates with and induces structural rearrangements of intracellular membranes (By similarity). It displays RNA-binding, nucleotide binding and NTPase activities (By similarity).</text>
</comment>
<comment type="function">
    <molecule>Protein 3A</molecule>
    <text evidence="1">Serves as membrane anchor via its hydrophobic domain.</text>
</comment>
<comment type="function">
    <molecule>VPg</molecule>
    <text evidence="4">Forms a primer, VPg-pU, which is utilized by the polymerase for the initiation of RNA chains.</text>
</comment>
<comment type="function">
    <molecule>Protease 3C</molecule>
    <text evidence="4 9">Cysteine protease that generates mature viral proteins from the precursor polyprotein (By similarity). In addition to its proteolytic activity, it binds to viral RNA, and thus influences viral genome replication. RNA and substrate cooperatively bind to the protease. Cleaves host PABP1, this cleavage is important for viral replication (By similarity).</text>
</comment>
<comment type="function">
    <molecule>RNA-directed RNA polymerase</molecule>
    <text evidence="9">Replicates the genomic and antigenomic RNAs by recognizing replications specific signals (By similarity). Performs VPg uridylylation (By similarity).</text>
</comment>
<comment type="catalytic activity">
    <reaction evidence="13">
        <text>RNA(n) + a ribonucleoside 5'-triphosphate = RNA(n+1) + diphosphate</text>
        <dbReference type="Rhea" id="RHEA:21248"/>
        <dbReference type="Rhea" id="RHEA-COMP:14527"/>
        <dbReference type="Rhea" id="RHEA-COMP:17342"/>
        <dbReference type="ChEBI" id="CHEBI:33019"/>
        <dbReference type="ChEBI" id="CHEBI:61557"/>
        <dbReference type="ChEBI" id="CHEBI:140395"/>
        <dbReference type="EC" id="2.7.7.48"/>
    </reaction>
</comment>
<comment type="catalytic activity">
    <reaction evidence="20">
        <text>ATP + H2O = ADP + phosphate + H(+)</text>
        <dbReference type="Rhea" id="RHEA:13065"/>
        <dbReference type="ChEBI" id="CHEBI:15377"/>
        <dbReference type="ChEBI" id="CHEBI:15378"/>
        <dbReference type="ChEBI" id="CHEBI:30616"/>
        <dbReference type="ChEBI" id="CHEBI:43474"/>
        <dbReference type="ChEBI" id="CHEBI:456216"/>
        <dbReference type="EC" id="3.6.4.13"/>
    </reaction>
</comment>
<comment type="catalytic activity">
    <reaction evidence="15">
        <text>Selective cleavage of Gln-|-Gly bond in the poliovirus polyprotein. In other picornavirus reactions Glu may be substituted for Gln, and Ser or Thr for Gly.</text>
        <dbReference type="EC" id="3.4.22.28"/>
    </reaction>
</comment>
<comment type="subunit">
    <molecule>Protein 2A</molecule>
    <text evidence="6 11">Interacts with host EIF4E (By similarity). Interacts with the leader protein (By similarity).</text>
</comment>
<comment type="subunit">
    <molecule>Leader protein</molecule>
    <text evidence="6 11 19">Interacts with host RAN; the complex L-RAN recruits cellular kinases responsible for the L-induced nucleocytoplasmic trafficking inhibition (By similarity). The complex L-RAN can further bind to the host exportins XPO1/CRM1 and CSE1L/CAS (By similarity). Interacts with the protein 2A (By similarity). Interacts with host RNASEL; this interaction prevents RNASEL activation by its substrate 2'-5' oligoadenylates (PubMed:23825954, PubMed:29652922).</text>
</comment>
<comment type="subcellular location">
    <molecule>Capsid protein VP2</molecule>
    <subcellularLocation>
        <location evidence="2">Virion</location>
    </subcellularLocation>
    <subcellularLocation>
        <location evidence="20">Host cytoplasm</location>
    </subcellularLocation>
</comment>
<comment type="subcellular location">
    <molecule>Capsid protein VP3</molecule>
    <subcellularLocation>
        <location evidence="2">Virion</location>
    </subcellularLocation>
    <subcellularLocation>
        <location evidence="20">Host cytoplasm</location>
    </subcellularLocation>
</comment>
<comment type="subcellular location">
    <molecule>Capsid protein VP1</molecule>
    <subcellularLocation>
        <location evidence="2">Virion</location>
    </subcellularLocation>
    <subcellularLocation>
        <location evidence="20">Host cytoplasm</location>
    </subcellularLocation>
</comment>
<comment type="subcellular location">
    <molecule>Protein 2A</molecule>
    <subcellularLocation>
        <location evidence="11">Host nucleus</location>
        <location evidence="11">Host nucleolus</location>
    </subcellularLocation>
</comment>
<comment type="subcellular location">
    <molecule>Protein 2B</molecule>
    <subcellularLocation>
        <location evidence="20">Host cytoplasmic vesicle membrane</location>
        <topology evidence="20">Peripheral membrane protein</topology>
        <orientation evidence="20">Cytoplasmic side</orientation>
    </subcellularLocation>
    <text evidence="20">Probably localizes to the surface of intracellular membrane vesicles that are induced after virus infection as the site for viral RNA replication. These vesicles are probably autophagosome-like vesicles.</text>
</comment>
<comment type="subcellular location">
    <molecule>Protein 2C</molecule>
    <subcellularLocation>
        <location evidence="20">Host cytoplasmic vesicle membrane</location>
        <topology evidence="20">Peripheral membrane protein</topology>
        <orientation evidence="20">Cytoplasmic side</orientation>
    </subcellularLocation>
    <text evidence="20">Probably localizes to the surface of intracellular membrane vesicles that are induced after virus infection as the site for viral RNA replication. These vesicles are probably autophagosome-like vesicles.</text>
</comment>
<comment type="subcellular location">
    <molecule>Protein 3A</molecule>
    <subcellularLocation>
        <location evidence="4">Host cytoplasmic vesicle membrane</location>
        <topology evidence="20">Peripheral membrane protein</topology>
        <orientation evidence="20">Cytoplasmic side</orientation>
    </subcellularLocation>
    <text evidence="4">Probably localizes to the surface of intracellular membrane vesicles that are induced after virus infection as the site for viral RNA replication. These vesicles are probably autophagosome-like vesicles.</text>
</comment>
<comment type="subcellular location">
    <molecule>VPg</molecule>
    <subcellularLocation>
        <location evidence="20">Virion</location>
    </subcellularLocation>
</comment>
<comment type="subcellular location">
    <molecule>Protease 3C</molecule>
    <subcellularLocation>
        <location evidence="20">Host cytoplasm</location>
    </subcellularLocation>
</comment>
<comment type="subcellular location">
    <molecule>RNA-directed RNA polymerase</molecule>
    <subcellularLocation>
        <location evidence="20">Host cytoplasmic vesicle membrane</location>
        <topology evidence="20">Peripheral membrane protein</topology>
        <orientation evidence="20">Cytoplasmic side</orientation>
    </subcellularLocation>
    <text evidence="20">Probably localizes to the surface of intracellular membrane vesicles that are induced after virus infection as the site for viral RNA replication. These vesicles are probably autophagosome-like vesicles.</text>
</comment>
<comment type="domain">
    <molecule>Leader protein</molecule>
    <text evidence="17">The Theilo and zinc-finger regions may both play a role in the inhibition of host nucleocytoplasmic trafficking and IRF-3 dimerization antagonism by the L protein.</text>
</comment>
<comment type="PTM">
    <molecule>Leader protein</molecule>
    <text evidence="11">Phosphorylated.</text>
</comment>
<comment type="PTM">
    <molecule>Genome polyprotein</molecule>
    <text evidence="4">Specific enzymatic cleavages by the viral protease in vivo yield a variety of precursors and mature proteins (By similarity). The polyprotein seems to be cotranslationally cleaved at the 2A/2B junction by a ribosomal skip from one codon to the next without formation of a peptide bond (By similarity). This process would release the P1-2A peptide from the translational complex (By similarity).</text>
</comment>
<comment type="PTM">
    <molecule>Capsid protein VP0</molecule>
    <text evidence="3">During virion maturation, immature virions are rendered infectious following cleavage of VP0 into VP4 and VP2. This maturation seems to be an autocatalytic event triggered by the presence of RNA in the capsid and is followed by a conformational change of the particle.</text>
</comment>
<comment type="PTM">
    <molecule>VPg</molecule>
    <text evidence="9">Uridylylated by the polymerase and is covalently linked to the 5'-end of genomic RNA. This uridylylated form acts as a nucleotide-peptide primer for the polymerase.</text>
</comment>
<comment type="PTM">
    <molecule>Capsid protein VP4</molecule>
    <text evidence="10">Myristoylation is required during RNA encapsidation and formation of the mature virus particle.</text>
</comment>
<comment type="miscellaneous">
    <text>Persistent strains of Theiler's virus (e.g. DA, TO, BeAn) cause persistent demyelinating disease whereas neurovirulent strains (such as GDVII) cause acute encephalitis.</text>
</comment>
<comment type="similarity">
    <text evidence="20">Belongs to the picornaviruses polyprotein family.</text>
</comment>
<comment type="online information" name="Virus Particle ExploreR db">
    <link uri="https://viperdb.org/Info_Page.php?VDB=1tme"/>
    <text>Icosahedral capsid structure</text>
</comment>
<organismHost>
    <name type="scientific">Mus musculus</name>
    <name type="common">Mouse</name>
    <dbReference type="NCBI Taxonomy" id="10090"/>
</organismHost>
<sequence length="2301" mass="256161">MACKHGYPDVCPICTAVDVTPGFEYLLLADGEWFPTDLLCVDLDDDVFWPSNSSNQSETMEWTDLPLVRDIVMEPQGNASSSDKSNSQSSGNEGVIINNFYSNQYQNSIDLSASGGNAGDAPQNNGQLSNILGGAANAFATMAPLLLDQNTEEMENLSDRVASDKAGNSATNTQSTVGRLCGYGEAHHGEHPASCADTATDKVLAAERYYTIDLASWTTTQEAFSHIRIPLPHVLAGEDGGVFGATLRRHYLCKTGWRVQVQCNASQFHAGSLLVFMAPEFYTGKGTKTGDMEPTDPFTMDTTWRAPQGAPTGYRYDSRTGFFAMNHQNQWQWTVYPHQILNLRTNTTVDLEVPYVNIAPTSSWTQHANWTLVVAVFSPLQYASGSSSDVQITASIQPVNPVFNGLRHETVIAQSPIAVTVREHKGCFYSTNPDTTVPIYGKTISTPNDYMCGEFSDLLELCKLPTFLGNPNSNNKRYPYFSATNSVPTTSLVDYQVALSCSCMCNSMLAAVARNFNQYRGSLNFLFVFTGAAMVKGKFLIAYTPPGAGKPTTRDQAMQATYAIWDLGLNSSFVFTAPFISPTHYRQTSYTSATIASVDGWVTVWQLTPLTYPSGAPVNSDILTLVSAGDDFTLRMPISPTKWAPQGSDNAEKGKVSNDDASVDFVAEPVKLPENQTRVAFFYDRAVPIGMLRPGQNIESTFVYQENDLRLNCLLLTPLPSFCPDSTSGPVKTKAPVQWRWVRSGGTTNFPLMTKQDYAFLCFSPFTYYKCDLEVTVSALGTDTVASVLRWAPTGAPADVTDQLIGYTPSLGETRNPHMWLVGAGNTQISFVVPYNSPLSVLPAAWFNGWSDFGNTKDFGVAPNADFGRLWIQGNTSASVRIRYKKMKVFCPRPTLFFPWPVSTRSKINADNPVPILELENPAAFYRIDLFITFIDEFITFDYKVHGRPVLTFRIPGFGLTPAGRMLVCMGEKPAHGPFTSSRSLYHVIFTATCSSFSFSIYKGRYRSWKKPIHDELVDRGYTTFGEFFRAVRAYHADYYKQRLIHDVEMNPGPVQSVFQPQGAVLTKSLAPQAGIQNLLLRLLGIDGDCSEVSKAITVVTDLFAAWERAKTTLVSPEFWSKLILKTTKFIAASVLYLHNPDFTTTVCLSLMTGVDLLTNDSVFDWLKNKLSSFFRTPPPVCPNVLQPQGPLREANEGFTFAKNIEWAMKTIQSIVNWLTSWFKQEEDHPQSKLDKFLMEFPDHCRNIMDMRNGRKAYCECTASFKYFDELYNLAVTCKRIPLASLCEKFKNRHDHSVTRPEPVVVVLRGAAGQGKSVTSQIIAQSVSKMAFGRQSVYSMPPDSEYFDGYENQFSVIMDDLGQNPDGEDFTVFCQMVSSTNFLPNMAHLERKGTPFTSSFIVATTNLPKFRPVTVAHYPAVDRRITFDFTVTAGPHCTTSNGMLDIEKAFDEIPGSKPQLACFSADCPLLHKRGVMFTCNRTKAVYNLQQVVKMVNDTITRKTENVKKMNSLVAQSPPDWEHFENILTCLRQNNAALQDQLDELQEAFAQARERSDFLSDWLKVSAIIFAGIASLSAVIKLASKFKESIWPSPVRVELSEGEQAAYAGRARAQKQALQVLDIQGGGKVLAQAGNPVMDFELFCAKNMVAPITFYYPDKAEVTQSCLLLRAHLFVVNRHVAETEWTAFKLKDVRHERDTVVTRSVNRSGAETDLTFIKVTKGPLFKDNVNKFCSNKDDFPARNDAVTGIMNTGLAFVYSGNFLIGNQPVNTTTGACFNHCLHYRAQTRRGWCGSAVICNVNGKKAVYGMHSAGGGGLAAATIITRELIEAAEKSMLALEPQGAIVDISTGSVVHVPRKTKLRRTVAHDVFQPKFEPAVLSRYDPRTDKDVDVVAFSKHTTNMESLPPVFDIVCDEYANRVFTILGKDNGLLTVEQAVLGLPGMDPMEKDTSPGLPYTQQGLRRTDLLNFNTAKMTPQLDYAHSKLVLGVYDDVVYQSFLKDEIRPLEKIHEAKTRIVDVPPFAHCIWGRQLLGRFASKFQTKPGLELGSAIGTDPDVDWTPYAAELSGFNYVYDVDYSNFDASHSTAMFECLIKNFFTEQNGFDRRIAEYLRSLAVSRHAYEDRRVLIRGGLLSGCAATSMLNTIMNNVIIRAALYLTYSNFEFDDIKVLSYGDDLLIGTNYQIDFNLVKERLAPFGYKITPANKTTTFPLTSHLQDVTFLKRRFVRFNSYLFRPQMDAVNLKAMVSYCKPGTLKEKLMSIALLAVHSGPDIYDEIFLPFRNVGIVVPTYSSMLYRWLSLFR</sequence>
<accession>P13899</accession>
<accession>Q88564</accession>
<accession>Q88565</accession>
<accession>Q88566</accession>
<accession>Q88567</accession>
<accession>Q88568</accession>
<accession>Q88569</accession>
<accession>Q88570</accession>
<accession>Q88571</accession>
<accession>Q88572</accession>
<accession>Q88573</accession>
<accession>Q88574</accession>
<accession>Q89580</accession>
<accession>S4UVR9</accession>
<name>POLG_TMEVD</name>
<keyword id="KW-0002">3D-structure</keyword>
<keyword id="KW-0067">ATP-binding</keyword>
<keyword id="KW-0167">Capsid protein</keyword>
<keyword id="KW-0191">Covalent protein-RNA linkage</keyword>
<keyword id="KW-1015">Disulfide bond</keyword>
<keyword id="KW-1262">Eukaryotic host gene expression shutoff by virus</keyword>
<keyword id="KW-1193">Eukaryotic host translation shutoff by virus</keyword>
<keyword id="KW-0347">Helicase</keyword>
<keyword id="KW-1035">Host cytoplasm</keyword>
<keyword id="KW-1036">Host cytoplasmic vesicle</keyword>
<keyword id="KW-1190">Host gene expression shutoff by virus</keyword>
<keyword id="KW-1043">Host membrane</keyword>
<keyword id="KW-1048">Host nucleus</keyword>
<keyword id="KW-0945">Host-virus interaction</keyword>
<keyword id="KW-0378">Hydrolase</keyword>
<keyword id="KW-1090">Inhibition of host innate immune response by virus</keyword>
<keyword id="KW-1092">Inhibition of host IRF3 by virus</keyword>
<keyword id="KW-1113">Inhibition of host RLR pathway by virus</keyword>
<keyword id="KW-0407">Ion channel</keyword>
<keyword id="KW-0406">Ion transport</keyword>
<keyword id="KW-0449">Lipoprotein</keyword>
<keyword id="KW-0472">Membrane</keyword>
<keyword id="KW-0479">Metal-binding</keyword>
<keyword id="KW-0519">Myristate</keyword>
<keyword id="KW-0547">Nucleotide-binding</keyword>
<keyword id="KW-0548">Nucleotidyltransferase</keyword>
<keyword id="KW-0597">Phosphoprotein</keyword>
<keyword id="KW-0645">Protease</keyword>
<keyword id="KW-0694">RNA-binding</keyword>
<keyword id="KW-0696">RNA-directed RNA polymerase</keyword>
<keyword id="KW-1143">T=pseudo3 icosahedral capsid protein</keyword>
<keyword id="KW-0788">Thiol protease</keyword>
<keyword id="KW-0808">Transferase</keyword>
<keyword id="KW-0813">Transport</keyword>
<keyword id="KW-1161">Viral attachment to host cell</keyword>
<keyword id="KW-0899">Viral immunoevasion</keyword>
<keyword id="KW-1182">Viral ion channel</keyword>
<keyword id="KW-0693">Viral RNA replication</keyword>
<keyword id="KW-0946">Virion</keyword>
<keyword id="KW-1160">Virus entry into host cell</keyword>
<keyword id="KW-0862">Zinc</keyword>
<keyword id="KW-0863">Zinc-finger</keyword>
<proteinExistence type="evidence at protein level"/>
<feature type="chain" id="PRO_0000446098" description="Genome polyprotein">
    <location>
        <begin position="1"/>
        <end position="2301"/>
    </location>
</feature>
<feature type="chain" id="PRO_0000040180" description="Leader protein">
    <location>
        <begin position="1"/>
        <end position="76"/>
    </location>
</feature>
<feature type="chain" id="PRO_0000310971" description="Capsid protein VP0">
    <location>
        <begin position="77"/>
        <end position="414"/>
    </location>
</feature>
<feature type="chain" id="PRO_0000040181" description="Capsid protein VP4">
    <location>
        <begin position="77"/>
        <end position="147"/>
    </location>
</feature>
<feature type="chain" id="PRO_0000040182" description="Capsid protein VP2">
    <location>
        <begin position="148"/>
        <end position="414"/>
    </location>
</feature>
<feature type="chain" id="PRO_0000040183" description="Capsid protein VP3">
    <location>
        <begin position="415"/>
        <end position="646"/>
    </location>
</feature>
<feature type="chain" id="PRO_0000040184" description="Capsid protein VP1">
    <location>
        <begin position="647"/>
        <end position="920"/>
    </location>
</feature>
<feature type="chain" id="PRO_0000040185" description="Protein 2A">
    <location>
        <begin position="921"/>
        <end position="1053"/>
    </location>
</feature>
<feature type="chain" id="PRO_0000040186" description="Protein 2B">
    <location>
        <begin position="1054"/>
        <end position="1189"/>
    </location>
</feature>
<feature type="chain" id="PRO_0000040187" description="Protein 2C">
    <location>
        <begin position="1190"/>
        <end position="1515"/>
    </location>
</feature>
<feature type="chain" id="PRO_0000040188" description="Protein 3A">
    <location>
        <begin position="1516"/>
        <end position="1603"/>
    </location>
</feature>
<feature type="chain" id="PRO_0000040189" description="VPg">
    <location>
        <begin position="1604"/>
        <end position="1623"/>
    </location>
</feature>
<feature type="chain" id="PRO_0000040190" description="Protease 3C">
    <location>
        <begin position="1624"/>
        <end position="1840"/>
    </location>
</feature>
<feature type="chain" id="PRO_0000040191" description="RNA-directed RNA polymerase">
    <location>
        <begin position="1841"/>
        <end position="2301"/>
    </location>
</feature>
<feature type="domain" description="SF3 helicase" evidence="14">
    <location>
        <begin position="1281"/>
        <end position="1446"/>
    </location>
</feature>
<feature type="domain" description="Peptidase C3" evidence="15">
    <location>
        <begin position="1634"/>
        <end position="1827"/>
    </location>
</feature>
<feature type="domain" description="RdRp catalytic" evidence="13">
    <location>
        <begin position="2069"/>
        <end position="2187"/>
    </location>
</feature>
<feature type="zinc finger region" evidence="9">
    <location>
        <begin position="3"/>
        <end position="14"/>
    </location>
</feature>
<feature type="region of interest" description="Acidic" evidence="20">
    <location>
        <begin position="30"/>
        <end position="46"/>
    </location>
</feature>
<feature type="region of interest" description="Theilo" evidence="17">
    <location>
        <begin position="60"/>
        <end position="73"/>
    </location>
</feature>
<feature type="region of interest" description="Host EIF4E binding" evidence="11">
    <location>
        <begin position="1039"/>
        <end position="1045"/>
    </location>
</feature>
<feature type="active site" description="For protease 3C activity" evidence="15">
    <location>
        <position position="1678"/>
    </location>
</feature>
<feature type="active site" description="For protease 3C activity" evidence="15">
    <location>
        <position position="1712"/>
    </location>
</feature>
<feature type="active site" description="For protease 3C activity" evidence="15">
    <location>
        <position position="1791"/>
    </location>
</feature>
<feature type="active site" description="For RdRp activity" evidence="9">
    <location>
        <position position="2075"/>
    </location>
</feature>
<feature type="active site" description="For RdRp activity" evidence="9">
    <location>
        <position position="2173"/>
    </location>
</feature>
<feature type="binding site" evidence="14">
    <location>
        <begin position="1310"/>
        <end position="1317"/>
    </location>
    <ligand>
        <name>ATP</name>
        <dbReference type="ChEBI" id="CHEBI:30616"/>
    </ligand>
</feature>
<feature type="site" description="Cleavage" evidence="12">
    <location>
        <begin position="147"/>
        <end position="148"/>
    </location>
</feature>
<feature type="site" description="Cleavage; by protease 3C" evidence="4">
    <location>
        <begin position="414"/>
        <end position="415"/>
    </location>
</feature>
<feature type="site" description="Cleavage; by protease 3C" evidence="4">
    <location>
        <begin position="646"/>
        <end position="647"/>
    </location>
</feature>
<feature type="site" description="Cleavage; by protease 3C" evidence="4">
    <location>
        <begin position="920"/>
        <end position="921"/>
    </location>
</feature>
<feature type="site" description="Cleavage; by ribosomal skip" evidence="4">
    <location>
        <begin position="1053"/>
        <end position="1054"/>
    </location>
</feature>
<feature type="site" description="Cleavage; by protease 3C" evidence="4">
    <location>
        <begin position="1189"/>
        <end position="1190"/>
    </location>
</feature>
<feature type="site" description="Cleavage; by protease 3C" evidence="4">
    <location>
        <begin position="1515"/>
        <end position="1516"/>
    </location>
</feature>
<feature type="site" description="Cleavage; by protease 3C" evidence="4">
    <location>
        <begin position="1603"/>
        <end position="1604"/>
    </location>
</feature>
<feature type="site" description="Cleavage; by protease 3C" evidence="4">
    <location>
        <begin position="1623"/>
        <end position="1624"/>
    </location>
</feature>
<feature type="site" description="Cleavage; by protease 3C" evidence="4">
    <location>
        <begin position="1840"/>
        <end position="1841"/>
    </location>
</feature>
<feature type="modified residue" description="O-(5'-phospho-RNA)-tyrosine" evidence="3">
    <location>
        <position position="1606"/>
    </location>
</feature>
<feature type="lipid moiety-binding region" description="N-myristoyl glycine; by host" evidence="10">
    <location>
        <position position="77"/>
    </location>
</feature>
<feature type="disulfide bond" evidence="2">
    <location>
        <begin position="501"/>
        <end position="503"/>
    </location>
</feature>
<feature type="sequence conflict" description="In Ref. 2; AGM61326." evidence="20" ref="2">
    <original>K</original>
    <variation>N</variation>
    <location>
        <position position="288"/>
    </location>
</feature>
<feature type="sequence conflict" description="In Ref. 2; AGM61326." evidence="20" ref="2">
    <original>F</original>
    <variation>L</variation>
    <location>
        <position position="377"/>
    </location>
</feature>
<feature type="sequence conflict" description="In Ref. 2; AGM61326." evidence="20" ref="2">
    <original>T</original>
    <variation>P</variation>
    <location>
        <position position="489"/>
    </location>
</feature>
<feature type="sequence conflict" description="In Ref. 2; AGM61326." evidence="20" ref="2">
    <original>C</original>
    <variation>R</variation>
    <location>
        <position position="503"/>
    </location>
</feature>
<feature type="sequence conflict" description="In Ref. 2; AGM61326." evidence="20" ref="2">
    <original>A</original>
    <variation>T</variation>
    <location>
        <position position="616"/>
    </location>
</feature>
<feature type="sequence conflict" description="In Ref. 2." evidence="20" ref="2">
    <original>A</original>
    <variation>V</variation>
    <location>
        <position position="644"/>
    </location>
</feature>
<feature type="sequence conflict" description="In Ref. 2." evidence="20" ref="2">
    <original>S</original>
    <variation>T</variation>
    <location>
        <position position="648"/>
    </location>
</feature>
<feature type="sequence conflict" description="In Ref. 2; AGM61326." evidence="20" ref="2">
    <original>F</original>
    <variation>V</variation>
    <location>
        <position position="1104"/>
    </location>
</feature>
<feature type="sequence conflict" description="In Ref. 2; AGM61326." evidence="20" ref="2">
    <original>P</original>
    <variation>S</variation>
    <location>
        <position position="1458"/>
    </location>
</feature>
<feature type="sequence conflict" description="In Ref. 2; AGM61326." evidence="20" ref="2">
    <original>N</original>
    <variation>D</variation>
    <location>
        <position position="1967"/>
    </location>
</feature>
<feature type="sequence conflict" description="In Ref. 2; AGM61326." evidence="20" ref="2">
    <original>P</original>
    <variation>R</variation>
    <location>
        <position position="2060"/>
    </location>
</feature>
<feature type="sequence conflict" description="In Ref. 2; AGM61326." evidence="20" ref="2">
    <original>L</original>
    <variation>P</variation>
    <location>
        <position position="2132"/>
    </location>
</feature>
<feature type="strand" evidence="24">
    <location>
        <begin position="90"/>
        <end position="92"/>
    </location>
</feature>
<feature type="helix" evidence="23">
    <location>
        <begin position="103"/>
        <end position="106"/>
    </location>
</feature>
<feature type="strand" evidence="23">
    <location>
        <begin position="162"/>
        <end position="166"/>
    </location>
</feature>
<feature type="strand" evidence="23">
    <location>
        <begin position="169"/>
        <end position="175"/>
    </location>
</feature>
<feature type="strand" evidence="23">
    <location>
        <begin position="179"/>
        <end position="181"/>
    </location>
</feature>
<feature type="helix" evidence="23">
    <location>
        <begin position="182"/>
        <end position="184"/>
    </location>
</feature>
<feature type="helix" evidence="23">
    <location>
        <begin position="204"/>
        <end position="206"/>
    </location>
</feature>
<feature type="strand" evidence="23">
    <location>
        <begin position="210"/>
        <end position="217"/>
    </location>
</feature>
<feature type="strand" evidence="23">
    <location>
        <begin position="226"/>
        <end position="231"/>
    </location>
</feature>
<feature type="helix" evidence="23">
    <location>
        <begin position="233"/>
        <end position="235"/>
    </location>
</feature>
<feature type="helix" evidence="23">
    <location>
        <begin position="238"/>
        <end position="240"/>
    </location>
</feature>
<feature type="helix" evidence="23">
    <location>
        <begin position="241"/>
        <end position="247"/>
    </location>
</feature>
<feature type="strand" evidence="23">
    <location>
        <begin position="250"/>
        <end position="262"/>
    </location>
</feature>
<feature type="strand" evidence="23">
    <location>
        <begin position="270"/>
        <end position="279"/>
    </location>
</feature>
<feature type="turn" evidence="23">
    <location>
        <begin position="289"/>
        <end position="291"/>
    </location>
</feature>
<feature type="strand" evidence="23">
    <location>
        <begin position="292"/>
        <end position="295"/>
    </location>
</feature>
<feature type="strand" evidence="23">
    <location>
        <begin position="316"/>
        <end position="318"/>
    </location>
</feature>
<feature type="helix" evidence="23">
    <location>
        <begin position="330"/>
        <end position="335"/>
    </location>
</feature>
<feature type="strand" evidence="23">
    <location>
        <begin position="336"/>
        <end position="342"/>
    </location>
</feature>
<feature type="turn" evidence="23">
    <location>
        <begin position="343"/>
        <end position="345"/>
    </location>
</feature>
<feature type="strand" evidence="23">
    <location>
        <begin position="347"/>
        <end position="353"/>
    </location>
</feature>
<feature type="strand" evidence="23">
    <location>
        <begin position="358"/>
        <end position="362"/>
    </location>
</feature>
<feature type="helix" evidence="23">
    <location>
        <begin position="364"/>
        <end position="366"/>
    </location>
</feature>
<feature type="strand" evidence="23">
    <location>
        <begin position="370"/>
        <end position="381"/>
    </location>
</feature>
<feature type="strand" evidence="23">
    <location>
        <begin position="390"/>
        <end position="406"/>
    </location>
</feature>
<feature type="turn" evidence="23">
    <location>
        <begin position="423"/>
        <end position="426"/>
    </location>
</feature>
<feature type="strand" evidence="23">
    <location>
        <begin position="438"/>
        <end position="440"/>
    </location>
</feature>
<feature type="helix" evidence="23">
    <location>
        <begin position="458"/>
        <end position="463"/>
    </location>
</feature>
<feature type="strand" evidence="23">
    <location>
        <begin position="477"/>
        <end position="486"/>
    </location>
</feature>
<feature type="strand" evidence="23">
    <location>
        <begin position="492"/>
        <end position="497"/>
    </location>
</feature>
<feature type="turn" evidence="23">
    <location>
        <begin position="503"/>
        <end position="506"/>
    </location>
</feature>
<feature type="helix" evidence="23">
    <location>
        <begin position="508"/>
        <end position="513"/>
    </location>
</feature>
<feature type="strand" evidence="23">
    <location>
        <begin position="516"/>
        <end position="521"/>
    </location>
</feature>
<feature type="strand" evidence="23">
    <location>
        <begin position="523"/>
        <end position="529"/>
    </location>
</feature>
<feature type="strand" evidence="23">
    <location>
        <begin position="536"/>
        <end position="544"/>
    </location>
</feature>
<feature type="strand" evidence="23">
    <location>
        <begin position="546"/>
        <end position="548"/>
    </location>
</feature>
<feature type="helix" evidence="23">
    <location>
        <begin position="554"/>
        <end position="557"/>
    </location>
</feature>
<feature type="strand" evidence="23">
    <location>
        <begin position="560"/>
        <end position="566"/>
    </location>
</feature>
<feature type="strand" evidence="23">
    <location>
        <begin position="568"/>
        <end position="570"/>
    </location>
</feature>
<feature type="strand" evidence="23">
    <location>
        <begin position="572"/>
        <end position="577"/>
    </location>
</feature>
<feature type="strand" evidence="23">
    <location>
        <begin position="582"/>
        <end position="584"/>
    </location>
</feature>
<feature type="strand" evidence="23">
    <location>
        <begin position="586"/>
        <end position="589"/>
    </location>
</feature>
<feature type="strand" evidence="23">
    <location>
        <begin position="601"/>
        <end position="611"/>
    </location>
</feature>
<feature type="strand" evidence="23">
    <location>
        <begin position="618"/>
        <end position="628"/>
    </location>
</feature>
<feature type="strand" evidence="23">
    <location>
        <begin position="633"/>
        <end position="637"/>
    </location>
</feature>
<feature type="helix" evidence="23">
    <location>
        <begin position="651"/>
        <end position="653"/>
    </location>
</feature>
<feature type="turn" evidence="23">
    <location>
        <begin position="661"/>
        <end position="664"/>
    </location>
</feature>
<feature type="helix" evidence="23">
    <location>
        <begin position="679"/>
        <end position="683"/>
    </location>
</feature>
<feature type="strand" evidence="23">
    <location>
        <begin position="687"/>
        <end position="692"/>
    </location>
</feature>
<feature type="strand" evidence="23">
    <location>
        <begin position="710"/>
        <end position="715"/>
    </location>
</feature>
<feature type="strand" evidence="23">
    <location>
        <begin position="721"/>
        <end position="723"/>
    </location>
</feature>
<feature type="strand" evidence="23">
    <location>
        <begin position="744"/>
        <end position="749"/>
    </location>
</feature>
<feature type="strand" evidence="23">
    <location>
        <begin position="751"/>
        <end position="755"/>
    </location>
</feature>
<feature type="helix" evidence="23">
    <location>
        <begin position="758"/>
        <end position="762"/>
    </location>
</feature>
<feature type="strand" evidence="23">
    <location>
        <begin position="766"/>
        <end position="779"/>
    </location>
</feature>
<feature type="strand" evidence="23">
    <location>
        <begin position="786"/>
        <end position="792"/>
    </location>
</feature>
<feature type="helix" evidence="23">
    <location>
        <begin position="810"/>
        <end position="812"/>
    </location>
</feature>
<feature type="strand" evidence="23">
    <location>
        <begin position="813"/>
        <end position="816"/>
    </location>
</feature>
<feature type="strand" evidence="23">
    <location>
        <begin position="818"/>
        <end position="823"/>
    </location>
</feature>
<feature type="strand" evidence="23">
    <location>
        <begin position="828"/>
        <end position="833"/>
    </location>
</feature>
<feature type="strand" evidence="23">
    <location>
        <begin position="838"/>
        <end position="845"/>
    </location>
</feature>
<feature type="strand" evidence="23">
    <location>
        <begin position="869"/>
        <end position="875"/>
    </location>
</feature>
<feature type="strand" evidence="23">
    <location>
        <begin position="878"/>
        <end position="892"/>
    </location>
</feature>
<dbReference type="EC" id="3.6.4.13"/>
<dbReference type="EC" id="3.4.22.28" evidence="9"/>
<dbReference type="EC" id="2.7.7.48" evidence="13"/>
<dbReference type="EMBL" id="M20301">
    <property type="protein sequence ID" value="AAA47928.1"/>
    <property type="molecule type" value="Genomic_RNA"/>
</dbReference>
<dbReference type="EMBL" id="JX443418">
    <property type="protein sequence ID" value="AGM61326.1"/>
    <property type="molecule type" value="Genomic_RNA"/>
</dbReference>
<dbReference type="PIR" id="A31228">
    <property type="entry name" value="GNNYTN"/>
</dbReference>
<dbReference type="PDB" id="1TME">
    <property type="method" value="X-ray"/>
    <property type="resolution" value="2.80 A"/>
    <property type="chains" value="1=647-920, 2=148-414, 3=415-650, 4=77-147"/>
</dbReference>
<dbReference type="PDB" id="1TMF">
    <property type="method" value="X-ray"/>
    <property type="resolution" value="3.50 A"/>
    <property type="chains" value="4=90-130"/>
</dbReference>
<dbReference type="PDBsum" id="1TME"/>
<dbReference type="PDBsum" id="1TMF"/>
<dbReference type="SMR" id="P13899"/>
<dbReference type="MEROPS" id="C03.010"/>
<dbReference type="EvolutionaryTrace" id="P13899"/>
<dbReference type="Proteomes" id="UP000000283">
    <property type="component" value="Genome"/>
</dbReference>
<dbReference type="Proteomes" id="UP000098676">
    <property type="component" value="Segment"/>
</dbReference>
<dbReference type="GO" id="GO:0044162">
    <property type="term" value="C:host cell cytoplasmic vesicle membrane"/>
    <property type="evidence" value="ECO:0007669"/>
    <property type="project" value="UniProtKB-SubCell"/>
</dbReference>
<dbReference type="GO" id="GO:0044196">
    <property type="term" value="C:host cell nucleolus"/>
    <property type="evidence" value="ECO:0007669"/>
    <property type="project" value="UniProtKB-SubCell"/>
</dbReference>
<dbReference type="GO" id="GO:0016020">
    <property type="term" value="C:membrane"/>
    <property type="evidence" value="ECO:0007669"/>
    <property type="project" value="UniProtKB-KW"/>
</dbReference>
<dbReference type="GO" id="GO:0039618">
    <property type="term" value="C:T=pseudo3 icosahedral viral capsid"/>
    <property type="evidence" value="ECO:0007669"/>
    <property type="project" value="UniProtKB-KW"/>
</dbReference>
<dbReference type="GO" id="GO:0005524">
    <property type="term" value="F:ATP binding"/>
    <property type="evidence" value="ECO:0007669"/>
    <property type="project" value="UniProtKB-KW"/>
</dbReference>
<dbReference type="GO" id="GO:0016887">
    <property type="term" value="F:ATP hydrolysis activity"/>
    <property type="evidence" value="ECO:0007669"/>
    <property type="project" value="RHEA"/>
</dbReference>
<dbReference type="GO" id="GO:0015267">
    <property type="term" value="F:channel activity"/>
    <property type="evidence" value="ECO:0007669"/>
    <property type="project" value="UniProtKB-KW"/>
</dbReference>
<dbReference type="GO" id="GO:0004197">
    <property type="term" value="F:cysteine-type endopeptidase activity"/>
    <property type="evidence" value="ECO:0007669"/>
    <property type="project" value="UniProtKB-EC"/>
</dbReference>
<dbReference type="GO" id="GO:0003723">
    <property type="term" value="F:RNA binding"/>
    <property type="evidence" value="ECO:0007669"/>
    <property type="project" value="UniProtKB-KW"/>
</dbReference>
<dbReference type="GO" id="GO:0003724">
    <property type="term" value="F:RNA helicase activity"/>
    <property type="evidence" value="ECO:0007669"/>
    <property type="project" value="UniProtKB-EC"/>
</dbReference>
<dbReference type="GO" id="GO:0003968">
    <property type="term" value="F:RNA-directed RNA polymerase activity"/>
    <property type="evidence" value="ECO:0007669"/>
    <property type="project" value="UniProtKB-KW"/>
</dbReference>
<dbReference type="GO" id="GO:0005198">
    <property type="term" value="F:structural molecule activity"/>
    <property type="evidence" value="ECO:0007669"/>
    <property type="project" value="InterPro"/>
</dbReference>
<dbReference type="GO" id="GO:0008270">
    <property type="term" value="F:zinc ion binding"/>
    <property type="evidence" value="ECO:0007669"/>
    <property type="project" value="UniProtKB-KW"/>
</dbReference>
<dbReference type="GO" id="GO:0006351">
    <property type="term" value="P:DNA-templated transcription"/>
    <property type="evidence" value="ECO:0007669"/>
    <property type="project" value="InterPro"/>
</dbReference>
<dbReference type="GO" id="GO:0034220">
    <property type="term" value="P:monoatomic ion transmembrane transport"/>
    <property type="evidence" value="ECO:0007669"/>
    <property type="project" value="UniProtKB-KW"/>
</dbReference>
<dbReference type="GO" id="GO:0006508">
    <property type="term" value="P:proteolysis"/>
    <property type="evidence" value="ECO:0007669"/>
    <property type="project" value="UniProtKB-KW"/>
</dbReference>
<dbReference type="GO" id="GO:0046718">
    <property type="term" value="P:symbiont entry into host cell"/>
    <property type="evidence" value="ECO:0007669"/>
    <property type="project" value="UniProtKB-KW"/>
</dbReference>
<dbReference type="GO" id="GO:0039520">
    <property type="term" value="P:symbiont-mediated activation of host autophagy"/>
    <property type="evidence" value="ECO:0000250"/>
    <property type="project" value="UniProtKB"/>
</dbReference>
<dbReference type="GO" id="GO:0039548">
    <property type="term" value="P:symbiont-mediated suppression of host cytoplasmic pattern recognition receptor signaling pathway via inhibition of IRF3 activity"/>
    <property type="evidence" value="ECO:0007669"/>
    <property type="project" value="UniProtKB-KW"/>
</dbReference>
<dbReference type="GO" id="GO:0039657">
    <property type="term" value="P:symbiont-mediated suppression of host gene expression"/>
    <property type="evidence" value="ECO:0007669"/>
    <property type="project" value="UniProtKB-KW"/>
</dbReference>
<dbReference type="GO" id="GO:0039694">
    <property type="term" value="P:viral RNA genome replication"/>
    <property type="evidence" value="ECO:0007669"/>
    <property type="project" value="InterPro"/>
</dbReference>
<dbReference type="GO" id="GO:0019062">
    <property type="term" value="P:virion attachment to host cell"/>
    <property type="evidence" value="ECO:0007669"/>
    <property type="project" value="UniProtKB-KW"/>
</dbReference>
<dbReference type="CDD" id="cd23211">
    <property type="entry name" value="Cardiovirus_RdRp"/>
    <property type="match status" value="1"/>
</dbReference>
<dbReference type="CDD" id="cd00205">
    <property type="entry name" value="rhv_like"/>
    <property type="match status" value="3"/>
</dbReference>
<dbReference type="FunFam" id="2.40.10.10:FF:000145">
    <property type="entry name" value="Genome polyprotein"/>
    <property type="match status" value="1"/>
</dbReference>
<dbReference type="FunFam" id="2.60.120.20:FF:000009">
    <property type="entry name" value="Genome polyprotein"/>
    <property type="match status" value="1"/>
</dbReference>
<dbReference type="FunFam" id="2.60.120.20:FF:000011">
    <property type="entry name" value="Genome polyprotein"/>
    <property type="match status" value="1"/>
</dbReference>
<dbReference type="FunFam" id="2.60.120.20:FF:000013">
    <property type="entry name" value="Genome polyprotein"/>
    <property type="match status" value="1"/>
</dbReference>
<dbReference type="FunFam" id="3.30.70.270:FF:000046">
    <property type="entry name" value="Genome polyprotein"/>
    <property type="match status" value="1"/>
</dbReference>
<dbReference type="FunFam" id="3.30.70.270:FF:000065">
    <property type="entry name" value="Genome polyprotein"/>
    <property type="match status" value="1"/>
</dbReference>
<dbReference type="FunFam" id="4.10.90.10:FF:000002">
    <property type="entry name" value="Genome polyprotein"/>
    <property type="match status" value="1"/>
</dbReference>
<dbReference type="Gene3D" id="1.20.960.20">
    <property type="match status" value="1"/>
</dbReference>
<dbReference type="Gene3D" id="2.60.120.20">
    <property type="match status" value="3"/>
</dbReference>
<dbReference type="Gene3D" id="3.30.70.270">
    <property type="match status" value="2"/>
</dbReference>
<dbReference type="Gene3D" id="4.10.90.10">
    <property type="entry name" value="Capsid protein VP4 superfamily, Picornavirus"/>
    <property type="match status" value="1"/>
</dbReference>
<dbReference type="Gene3D" id="2.40.10.10">
    <property type="entry name" value="Trypsin-like serine proteases"/>
    <property type="match status" value="1"/>
</dbReference>
<dbReference type="InterPro" id="IPR015031">
    <property type="entry name" value="Capsid_VP4_Picornavir"/>
</dbReference>
<dbReference type="InterPro" id="IPR037080">
    <property type="entry name" value="Capsid_VP4_sf_Picornavirus"/>
</dbReference>
<dbReference type="InterPro" id="IPR043502">
    <property type="entry name" value="DNA/RNA_pol_sf"/>
</dbReference>
<dbReference type="InterPro" id="IPR004004">
    <property type="entry name" value="Helic/Pol/Pept_Calicivir-typ"/>
</dbReference>
<dbReference type="InterPro" id="IPR000605">
    <property type="entry name" value="Helicase_SF3_ssDNA/RNA_vir"/>
</dbReference>
<dbReference type="InterPro" id="IPR014759">
    <property type="entry name" value="Helicase_SF3_ssRNA_vir"/>
</dbReference>
<dbReference type="InterPro" id="IPR044067">
    <property type="entry name" value="PCV_3C_PRO"/>
</dbReference>
<dbReference type="InterPro" id="IPR000199">
    <property type="entry name" value="Peptidase_C3A/C3B_picornavir"/>
</dbReference>
<dbReference type="InterPro" id="IPR009003">
    <property type="entry name" value="Peptidase_S1_PA"/>
</dbReference>
<dbReference type="InterPro" id="IPR043504">
    <property type="entry name" value="Peptidase_S1_PA_chymotrypsin"/>
</dbReference>
<dbReference type="InterPro" id="IPR001676">
    <property type="entry name" value="Picornavirus_capsid"/>
</dbReference>
<dbReference type="InterPro" id="IPR043128">
    <property type="entry name" value="Rev_trsase/Diguanyl_cyclase"/>
</dbReference>
<dbReference type="InterPro" id="IPR033703">
    <property type="entry name" value="Rhv-like"/>
</dbReference>
<dbReference type="InterPro" id="IPR001205">
    <property type="entry name" value="RNA-dir_pol_C"/>
</dbReference>
<dbReference type="InterPro" id="IPR007094">
    <property type="entry name" value="RNA-dir_pol_PSvirus"/>
</dbReference>
<dbReference type="InterPro" id="IPR029053">
    <property type="entry name" value="Viral_coat"/>
</dbReference>
<dbReference type="Pfam" id="PF00548">
    <property type="entry name" value="Peptidase_C3"/>
    <property type="match status" value="1"/>
</dbReference>
<dbReference type="Pfam" id="PF00680">
    <property type="entry name" value="RdRP_1"/>
    <property type="match status" value="1"/>
</dbReference>
<dbReference type="Pfam" id="PF00073">
    <property type="entry name" value="Rhv"/>
    <property type="match status" value="2"/>
</dbReference>
<dbReference type="Pfam" id="PF22663">
    <property type="entry name" value="Rhv_5"/>
    <property type="match status" value="1"/>
</dbReference>
<dbReference type="Pfam" id="PF00910">
    <property type="entry name" value="RNA_helicase"/>
    <property type="match status" value="1"/>
</dbReference>
<dbReference type="Pfam" id="PF08935">
    <property type="entry name" value="VP4_2"/>
    <property type="match status" value="1"/>
</dbReference>
<dbReference type="PRINTS" id="PR00918">
    <property type="entry name" value="CALICVIRUSNS"/>
</dbReference>
<dbReference type="SUPFAM" id="SSF56672">
    <property type="entry name" value="DNA/RNA polymerases"/>
    <property type="match status" value="1"/>
</dbReference>
<dbReference type="SUPFAM" id="SSF88633">
    <property type="entry name" value="Positive stranded ssRNA viruses"/>
    <property type="match status" value="2"/>
</dbReference>
<dbReference type="SUPFAM" id="SSF50494">
    <property type="entry name" value="Trypsin-like serine proteases"/>
    <property type="match status" value="1"/>
</dbReference>
<dbReference type="PROSITE" id="PS51874">
    <property type="entry name" value="PCV_3C_PRO"/>
    <property type="match status" value="1"/>
</dbReference>
<dbReference type="PROSITE" id="PS50507">
    <property type="entry name" value="RDRP_SSRNA_POS"/>
    <property type="match status" value="1"/>
</dbReference>
<dbReference type="PROSITE" id="PS51218">
    <property type="entry name" value="SF3_HELICASE_2"/>
    <property type="match status" value="1"/>
</dbReference>
<protein>
    <recommendedName>
        <fullName>Genome polyprotein</fullName>
    </recommendedName>
    <component>
        <recommendedName>
            <fullName>Leader protein</fullName>
            <shortName>L</shortName>
        </recommendedName>
    </component>
    <component>
        <recommendedName>
            <fullName>Capsid protein VP0</fullName>
        </recommendedName>
        <alternativeName>
            <fullName>VP4-VP2</fullName>
        </alternativeName>
    </component>
    <component>
        <recommendedName>
            <fullName>Capsid protein VP4</fullName>
        </recommendedName>
        <alternativeName>
            <fullName>P1A</fullName>
        </alternativeName>
        <alternativeName>
            <fullName>Virion protein 4</fullName>
        </alternativeName>
    </component>
    <component>
        <recommendedName>
            <fullName>Capsid protein VP2</fullName>
        </recommendedName>
        <alternativeName>
            <fullName>P1B</fullName>
        </alternativeName>
        <alternativeName>
            <fullName>Virion protein 2</fullName>
        </alternativeName>
    </component>
    <component>
        <recommendedName>
            <fullName>Capsid protein VP3</fullName>
        </recommendedName>
        <alternativeName>
            <fullName>P1C</fullName>
        </alternativeName>
        <alternativeName>
            <fullName>Virion protein 3</fullName>
        </alternativeName>
    </component>
    <component>
        <recommendedName>
            <fullName>Capsid protein VP1</fullName>
        </recommendedName>
        <alternativeName>
            <fullName>P1D</fullName>
        </alternativeName>
        <alternativeName>
            <fullName>Virion protein 1</fullName>
        </alternativeName>
    </component>
    <component>
        <recommendedName>
            <fullName>Protein 2A</fullName>
            <shortName>P2A</shortName>
        </recommendedName>
    </component>
    <component>
        <recommendedName>
            <fullName>Protein 2B</fullName>
            <shortName>P2B</shortName>
        </recommendedName>
    </component>
    <component>
        <recommendedName>
            <fullName>Protein 2C</fullName>
            <shortName>P2C</shortName>
            <ecNumber>3.6.4.13</ecNumber>
        </recommendedName>
    </component>
    <component>
        <recommendedName>
            <fullName>Protein 3A</fullName>
            <shortName>P3A</shortName>
        </recommendedName>
    </component>
    <component>
        <recommendedName>
            <fullName>VPg</fullName>
            <shortName>P3B</shortName>
        </recommendedName>
        <alternativeName>
            <fullName>Protein 3B</fullName>
        </alternativeName>
    </component>
    <component>
        <recommendedName>
            <fullName>Protease 3C</fullName>
            <shortName>P3C</shortName>
            <ecNumber evidence="9">3.4.22.28</ecNumber>
        </recommendedName>
        <alternativeName>
            <fullName>Picornain 3C</fullName>
        </alternativeName>
    </component>
    <component>
        <recommendedName>
            <fullName>RNA-directed RNA polymerase</fullName>
            <shortName>RdRp</shortName>
            <ecNumber evidence="13">2.7.7.48</ecNumber>
        </recommendedName>
        <alternativeName>
            <fullName>3D polymerase</fullName>
            <shortName>3Dpol</shortName>
        </alternativeName>
        <alternativeName>
            <fullName>Protein 3D</fullName>
            <shortName>3D</shortName>
        </alternativeName>
    </component>
</protein>
<reference key="1">
    <citation type="journal article" date="1988" name="Virology">
        <title>Molecular cloning and sequence determination of DA strain of Theiler's murine encephalomyelitis viruses.</title>
        <authorList>
            <person name="Ohara Y."/>
            <person name="Stein S."/>
            <person name="Fu J."/>
            <person name="Stillman L."/>
            <person name="Klaman L."/>
            <person name="Roos R.P."/>
        </authorList>
    </citation>
    <scope>NUCLEOTIDE SEQUENCE [GENOMIC RNA]</scope>
</reference>
<reference key="2">
    <citation type="journal article" date="2013" name="PLoS Pathog.">
        <title>Evasion of Antiviral Innate Immunity by Theiler's Virus L* Protein through Direct Inhibition of RNase L.</title>
        <authorList>
            <person name="Sorgeloos F."/>
            <person name="Jha B.K."/>
            <person name="Silverman R.H."/>
            <person name="Michiels T."/>
        </authorList>
    </citation>
    <scope>NUCLEOTIDE SEQUENCE [GENOMIC RNA]</scope>
    <scope>FUNCTION (LEADER PROTEIN)</scope>
    <scope>INTERACTION WITH MOUSE RNASEL (LEADER PROTEIN)</scope>
</reference>
<reference key="3">
    <citation type="journal article" date="1991" name="J. Virol.">
        <title>Alternative translation initiation site in the DA strain of Theiler's murine encephalomyelitis virus.</title>
        <authorList>
            <person name="Kong W.P."/>
            <person name="Roos R.P."/>
        </authorList>
    </citation>
    <scope>ALTERNATIVE INITIATION</scope>
</reference>
<reference key="4">
    <citation type="journal article" date="2004" name="J. Virol.">
        <title>The leader protein of Theiler's virus interferes with nucleocytoplasmic trafficking of cellular proteins.</title>
        <authorList>
            <person name="Delhaye S."/>
            <person name="van Pesch V."/>
            <person name="Michiels T."/>
        </authorList>
    </citation>
    <scope>FUNCTION (LEADER PROTEIN)</scope>
</reference>
<reference key="5">
    <citation type="journal article" date="2009" name="J. Gen. Virol.">
        <title>Inhibition of mRNA export and dimerization of interferon regulatory factor 3 by Theiler's virus leader protein.</title>
        <authorList>
            <person name="Ricour C."/>
            <person name="Delhaye S."/>
            <person name="Hato S.V."/>
            <person name="Olenyik T.D."/>
            <person name="Michel B."/>
            <person name="van Kuppeveld F.J."/>
            <person name="Gustin K.E."/>
            <person name="Michiels T."/>
        </authorList>
    </citation>
    <scope>FUNCTION (LEADER PROTEIN)</scope>
</reference>
<reference key="6">
    <citation type="journal article" date="2009" name="J. Virol.">
        <title>Random mutagenesis defines a domain of Theiler's virus leader protein that is essential for antagonism of nucleocytoplasmic trafficking and cytokine gene expression.</title>
        <authorList>
            <person name="Ricour C."/>
            <person name="Borghese F."/>
            <person name="Sorgeloos F."/>
            <person name="Hato S.V."/>
            <person name="van Kuppeveld F.J."/>
            <person name="Michiels T."/>
        </authorList>
    </citation>
    <scope>FUNCTION (LEADER PROTEIN)</scope>
    <scope>DOMAIN (LEADER PROTEIN)</scope>
</reference>
<reference key="7">
    <citation type="journal article" date="2018" name="PLoS Pathog.">
        <title>A novel mechanism of RNase L inhibition: Theiler's virus L* protein prevents 2-5A from binding to RNase L.</title>
        <authorList>
            <person name="Drappier M."/>
            <person name="Jha B.K."/>
            <person name="Stone S."/>
            <person name="Elliott R."/>
            <person name="Zhang R."/>
            <person name="Vertommen D."/>
            <person name="Weiss S.R."/>
            <person name="Silverman R.H."/>
            <person name="Michiels T."/>
        </authorList>
    </citation>
    <scope>FUNCTION (LEADER PROTEIN)</scope>
    <scope>INTERACTION WITH MOUSE RNASEL (LEADER PROTEIN)</scope>
</reference>
<reference key="8">
    <citation type="journal article" date="1992" name="Proc. Natl. Acad. Sci. U.S.A.">
        <title>Three-dimensional structure of Theiler virus.</title>
        <authorList>
            <person name="Grant R.A."/>
            <person name="Filman D.J."/>
            <person name="Fujinami R.S."/>
            <person name="Icenogle J.P."/>
            <person name="Hogle J.M."/>
        </authorList>
    </citation>
    <scope>X-RAY CRYSTALLOGRAPHY (2.8 ANGSTROMS)</scope>
</reference>
<evidence type="ECO:0000250" key="1"/>
<evidence type="ECO:0000250" key="2">
    <source>
        <dbReference type="UniProtKB" id="C0MHL9"/>
    </source>
</evidence>
<evidence type="ECO:0000250" key="3">
    <source>
        <dbReference type="UniProtKB" id="P03300"/>
    </source>
</evidence>
<evidence type="ECO:0000250" key="4">
    <source>
        <dbReference type="UniProtKB" id="P03304"/>
    </source>
</evidence>
<evidence type="ECO:0000250" key="5">
    <source>
        <dbReference type="UniProtKB" id="P03305"/>
    </source>
</evidence>
<evidence type="ECO:0000250" key="6">
    <source>
        <dbReference type="UniProtKB" id="P08544"/>
    </source>
</evidence>
<evidence type="ECO:0000250" key="7">
    <source>
        <dbReference type="UniProtKB" id="P08545"/>
    </source>
</evidence>
<evidence type="ECO:0000250" key="8">
    <source>
        <dbReference type="UniProtKB" id="P08617"/>
    </source>
</evidence>
<evidence type="ECO:0000250" key="9">
    <source>
        <dbReference type="UniProtKB" id="P12296"/>
    </source>
</evidence>
<evidence type="ECO:0000250" key="10">
    <source>
        <dbReference type="UniProtKB" id="Q66282"/>
    </source>
</evidence>
<evidence type="ECO:0000250" key="11">
    <source>
        <dbReference type="UniProtKB" id="Q66765"/>
    </source>
</evidence>
<evidence type="ECO:0000255" key="12"/>
<evidence type="ECO:0000255" key="13">
    <source>
        <dbReference type="PROSITE-ProRule" id="PRU00539"/>
    </source>
</evidence>
<evidence type="ECO:0000255" key="14">
    <source>
        <dbReference type="PROSITE-ProRule" id="PRU00551"/>
    </source>
</evidence>
<evidence type="ECO:0000255" key="15">
    <source>
        <dbReference type="PROSITE-ProRule" id="PRU01222"/>
    </source>
</evidence>
<evidence type="ECO:0000269" key="16">
    <source>
    </source>
</evidence>
<evidence type="ECO:0000269" key="17">
    <source>
    </source>
</evidence>
<evidence type="ECO:0000269" key="18">
    <source>
    </source>
</evidence>
<evidence type="ECO:0000269" key="19">
    <source>
    </source>
</evidence>
<evidence type="ECO:0000305" key="20"/>
<evidence type="ECO:0000305" key="21">
    <source>
    </source>
</evidence>
<evidence type="ECO:0000305" key="22">
    <source>
    </source>
</evidence>
<evidence type="ECO:0007829" key="23">
    <source>
        <dbReference type="PDB" id="1TME"/>
    </source>
</evidence>
<evidence type="ECO:0007829" key="24">
    <source>
        <dbReference type="PDB" id="1TMF"/>
    </source>
</evidence>